<sequence>MALSFFFLAISLGSPTAIGDVSFDLSTATKKSYSSFITQLRDALPTQGTVCGIPLLPSTASGSQWFRFFNLTNYNDETVTVAVNVTNVYIVAYRADAVSYFFEDTPAEAFKLIFAGTKTVKLPYSGNYDKLQSVVGKQRDMIELGIPALSSAITNMVYYDYQSTAAALLVLIQCTAEAARYKYIEQQVSSHISSNFYPNQAVISLENKWGALSKQIQIANRTGHGQFENPVELYNPDGTRFSVTNTSAGVVKGNIKLLLYYKASVGSEYDIPTTILHPGAMGMLHNQNGNYVTM</sequence>
<keyword id="KW-0903">Direct protein sequencing</keyword>
<keyword id="KW-0325">Glycoprotein</keyword>
<keyword id="KW-0378">Hydrolase</keyword>
<keyword id="KW-0611">Plant defense</keyword>
<keyword id="KW-0652">Protein synthesis inhibitor</keyword>
<keyword id="KW-0732">Signal</keyword>
<keyword id="KW-0800">Toxin</keyword>
<organism>
    <name type="scientific">Trichosanthes anguina</name>
    <name type="common">Snake gourd</name>
    <dbReference type="NCBI Taxonomy" id="50544"/>
    <lineage>
        <taxon>Eukaryota</taxon>
        <taxon>Viridiplantae</taxon>
        <taxon>Streptophyta</taxon>
        <taxon>Embryophyta</taxon>
        <taxon>Tracheophyta</taxon>
        <taxon>Spermatophyta</taxon>
        <taxon>Magnoliopsida</taxon>
        <taxon>eudicotyledons</taxon>
        <taxon>Gunneridae</taxon>
        <taxon>Pentapetalae</taxon>
        <taxon>rosids</taxon>
        <taxon>fabids</taxon>
        <taxon>Cucurbitales</taxon>
        <taxon>Cucurbitaceae</taxon>
        <taxon>Sicyoeae</taxon>
        <taxon>Trichosanthes</taxon>
    </lineage>
</organism>
<protein>
    <recommendedName>
        <fullName>Type I ribosome-inactivating protein trichoanguina</fullName>
        <shortName>RIP</shortName>
        <ecNumber>3.2.2.22</ecNumber>
    </recommendedName>
    <alternativeName>
        <fullName>Trichoanguin</fullName>
    </alternativeName>
    <alternativeName>
        <fullName>rRNA N-glycosidase</fullName>
    </alternativeName>
</protein>
<gene>
    <name type="primary">TCA</name>
</gene>
<evidence type="ECO:0000250" key="1"/>
<evidence type="ECO:0000269" key="2">
    <source>
    </source>
</evidence>
<evidence type="ECO:0000305" key="3"/>
<feature type="signal peptide" evidence="2">
    <location>
        <begin position="1"/>
        <end position="19"/>
    </location>
</feature>
<feature type="chain" id="PRO_0000030763" description="Type I ribosome-inactivating protein trichoanguina">
    <location>
        <begin position="20"/>
        <end position="264"/>
    </location>
</feature>
<feature type="propeptide" id="PRO_0000030764">
    <location>
        <begin position="265"/>
        <end position="294"/>
    </location>
</feature>
<feature type="active site" evidence="1">
    <location>
        <position position="177"/>
    </location>
</feature>
<feature type="active site" evidence="1">
    <location>
        <position position="180"/>
    </location>
</feature>
<feature type="glycosylation site" description="N-linked (GlcNAc...) asparagine" evidence="3">
    <location>
        <position position="70"/>
    </location>
</feature>
<feature type="glycosylation site" description="N-linked (GlcNAc...) asparagine" evidence="3">
    <location>
        <position position="220"/>
    </location>
</feature>
<feature type="sequence conflict" description="In Ref. 2; AA sequence." evidence="3" ref="2">
    <original>C</original>
    <variation>Y</variation>
    <location>
        <position position="51"/>
    </location>
</feature>
<feature type="sequence conflict" description="In Ref. 2; AA sequence." evidence="3" ref="2">
    <original>W</original>
    <variation>R</variation>
    <location>
        <position position="65"/>
    </location>
</feature>
<feature type="sequence conflict" description="In Ref. 2; AA sequence." evidence="3" ref="2">
    <original>N</original>
    <variation>D</variation>
    <location>
        <position position="84"/>
    </location>
</feature>
<feature type="sequence conflict" description="In Ref. 2; AA sequence." evidence="3" ref="2">
    <original>A</original>
    <variation>S</variation>
    <location>
        <position position="152"/>
    </location>
</feature>
<feature type="sequence conflict" description="In Ref. 2; AA sequence." evidence="3" ref="2">
    <original>C</original>
    <variation>S</variation>
    <location>
        <position position="174"/>
    </location>
</feature>
<feature type="sequence conflict" description="In Ref. 2; AA sequence." evidence="3" ref="2">
    <original>N</original>
    <variation>H</variation>
    <location>
        <position position="245"/>
    </location>
</feature>
<comment type="function">
    <text>Inhibits protein synthesis by depurinating 28S rRNA in ribosomes.</text>
</comment>
<comment type="catalytic activity">
    <reaction>
        <text>Endohydrolysis of the N-glycosidic bond at one specific adenosine on the 28S rRNA.</text>
        <dbReference type="EC" id="3.2.2.22"/>
    </reaction>
</comment>
<comment type="similarity">
    <text evidence="3">Belongs to the ribosome-inactivating protein family. Type 1 RIP subfamily.</text>
</comment>
<dbReference type="EC" id="3.2.2.22"/>
<dbReference type="EMBL" id="AF055086">
    <property type="protein sequence ID" value="AAD02686.1"/>
    <property type="molecule type" value="mRNA"/>
</dbReference>
<dbReference type="PIR" id="JC4840">
    <property type="entry name" value="JC4840"/>
</dbReference>
<dbReference type="SMR" id="P56626"/>
<dbReference type="GlyCosmos" id="P56626">
    <property type="glycosylation" value="2 sites, No reported glycans"/>
</dbReference>
<dbReference type="GO" id="GO:0030598">
    <property type="term" value="F:rRNA N-glycosylase activity"/>
    <property type="evidence" value="ECO:0007669"/>
    <property type="project" value="UniProtKB-EC"/>
</dbReference>
<dbReference type="GO" id="GO:0090729">
    <property type="term" value="F:toxin activity"/>
    <property type="evidence" value="ECO:0007669"/>
    <property type="project" value="UniProtKB-KW"/>
</dbReference>
<dbReference type="GO" id="GO:0006952">
    <property type="term" value="P:defense response"/>
    <property type="evidence" value="ECO:0007669"/>
    <property type="project" value="UniProtKB-KW"/>
</dbReference>
<dbReference type="GO" id="GO:0017148">
    <property type="term" value="P:negative regulation of translation"/>
    <property type="evidence" value="ECO:0007669"/>
    <property type="project" value="UniProtKB-KW"/>
</dbReference>
<dbReference type="Gene3D" id="3.40.420.10">
    <property type="entry name" value="Ricin (A subunit), domain 1"/>
    <property type="match status" value="1"/>
</dbReference>
<dbReference type="Gene3D" id="4.10.470.10">
    <property type="entry name" value="Ricin (A Subunit), domain 2"/>
    <property type="match status" value="1"/>
</dbReference>
<dbReference type="InterPro" id="IPR036041">
    <property type="entry name" value="Ribosome-inact_prot_sf"/>
</dbReference>
<dbReference type="InterPro" id="IPR017989">
    <property type="entry name" value="Ribosome_inactivat_1/2"/>
</dbReference>
<dbReference type="InterPro" id="IPR001574">
    <property type="entry name" value="Ribosome_inactivat_prot"/>
</dbReference>
<dbReference type="InterPro" id="IPR016138">
    <property type="entry name" value="Ribosome_inactivat_prot_sub1"/>
</dbReference>
<dbReference type="InterPro" id="IPR016139">
    <property type="entry name" value="Ribosome_inactivat_prot_sub2"/>
</dbReference>
<dbReference type="PANTHER" id="PTHR33453">
    <property type="match status" value="1"/>
</dbReference>
<dbReference type="PANTHER" id="PTHR33453:SF34">
    <property type="entry name" value="RIBOSOME-INACTIVATING PROTEIN"/>
    <property type="match status" value="1"/>
</dbReference>
<dbReference type="Pfam" id="PF00161">
    <property type="entry name" value="RIP"/>
    <property type="match status" value="1"/>
</dbReference>
<dbReference type="PRINTS" id="PR00396">
    <property type="entry name" value="SHIGARICIN"/>
</dbReference>
<dbReference type="SUPFAM" id="SSF56371">
    <property type="entry name" value="Ribosome inactivating proteins (RIP)"/>
    <property type="match status" value="1"/>
</dbReference>
<proteinExistence type="evidence at protein level"/>
<reference key="1">
    <citation type="journal article" date="1999" name="Biochem. J.">
        <title>Purification, characterization and molecular cloning of trichoanguin, a novel type I ribosome-inactivating protein from the seeds of Trichosanthes anguina.</title>
        <authorList>
            <person name="Chow L.-P."/>
            <person name="Chou M.-H."/>
            <person name="Ho C.-Y."/>
            <person name="Chuang C.-C."/>
            <person name="Pan F.-M."/>
            <person name="Wu S.-H."/>
            <person name="Lin J.-Y."/>
        </authorList>
    </citation>
    <scope>NUCLEOTIDE SEQUENCE [MRNA]</scope>
    <scope>PARTIAL PROTEIN SEQUENCE</scope>
    <scope>CHARACTERIZATION</scope>
    <source>
        <strain>cv. Anguina</strain>
        <tissue>Seed</tissue>
    </source>
</reference>
<reference key="2">
    <citation type="journal article" date="1996" name="J. Biomed. Sci.">
        <title>Amino acid sequence of trichoanguina, a ribosomal-inactivating protein from Trichosanthes anguina seeds.</title>
        <authorList>
            <person name="Chow L.-P."/>
            <person name="Kamo M."/>
            <person name="Lin J.-Y."/>
            <person name="Wang S.-H."/>
            <person name="Ueno Y."/>
            <person name="Tsugita A."/>
        </authorList>
    </citation>
    <scope>PROTEIN SEQUENCE OF 20-264</scope>
    <source>
        <tissue>Seed</tissue>
    </source>
</reference>
<accession>P56626</accession>
<accession>Q9ZQY7</accession>
<name>RIP1_TRIAN</name>